<organism>
    <name type="scientific">Saccharomyces cerevisiae (strain YJM789)</name>
    <name type="common">Baker's yeast</name>
    <dbReference type="NCBI Taxonomy" id="307796"/>
    <lineage>
        <taxon>Eukaryota</taxon>
        <taxon>Fungi</taxon>
        <taxon>Dikarya</taxon>
        <taxon>Ascomycota</taxon>
        <taxon>Saccharomycotina</taxon>
        <taxon>Saccharomycetes</taxon>
        <taxon>Saccharomycetales</taxon>
        <taxon>Saccharomycetaceae</taxon>
        <taxon>Saccharomyces</taxon>
    </lineage>
</organism>
<keyword id="KW-0963">Cytoplasm</keyword>
<keyword id="KW-0378">Hydrolase</keyword>
<keyword id="KW-0464">Manganese</keyword>
<keyword id="KW-0479">Metal-binding</keyword>
<keyword id="KW-0507">mRNA processing</keyword>
<keyword id="KW-0866">Nonsense-mediated mRNA decay</keyword>
<keyword id="KW-0597">Phosphoprotein</keyword>
<keyword id="KW-0694">RNA-binding</keyword>
<protein>
    <recommendedName>
        <fullName>mRNA-decapping enzyme subunit 2</fullName>
        <ecNumber>3.-.-.-</ecNumber>
    </recommendedName>
    <alternativeName>
        <fullName>Protein PSU1</fullName>
    </alternativeName>
</protein>
<comment type="function">
    <text evidence="1">Catalytic component of the decapping complex necessary for the degradation of mRNAs, both in normal mRNA turnover and in nonsense-mediated mRNA decay. Removes the 7-methyl guanine cap structure from mRNA molecules, yielding a 5'-phosphorylated mRNA fragment and 7m-GDP. Decapping is the major pathway of mRNA degradation in yeast. It occurs through deadenylation, decapping and subsequent 5' to 3' exonucleolytic decay of the transcript body (By similarity).</text>
</comment>
<comment type="cofactor">
    <cofactor evidence="1">
        <name>Mn(2+)</name>
        <dbReference type="ChEBI" id="CHEBI:29035"/>
    </cofactor>
</comment>
<comment type="subunit">
    <text evidence="1">Component of the decapping complex composed of DCP1 and DCP2. Interacts with mRNA, LSM2, LSM4 and LSM8.</text>
</comment>
<comment type="subcellular location">
    <subcellularLocation>
        <location evidence="1">Cytoplasm</location>
        <location evidence="1">P-body</location>
    </subcellularLocation>
    <text evidence="1">Is concentrated in several cytoplasmic foci called P bodies (or cytoplasmic processing bodies) which represent sites of mRNA decapping and 5' to 3' exonucleotidic decay.</text>
</comment>
<comment type="similarity">
    <text evidence="5">Belongs to the Nudix hydrolase family. DCP2 subfamily.</text>
</comment>
<sequence length="970" mass="108657">MSLPLRHALENVTSVDRILEDLLVRFIINCPNEDLSSVERELFHFEEASWFYTDFIKLMNPTLPSLKIKSFAQLIIKLCPLVWKWDIRVDEALQQFSKYKKSIPVRGAAIFNENLSKILLVQGTESDSWSFPRGKISKDENDIDCCIREVKEEIGFDLTDYIDDNQFIERNIQGKNYKIFLISGVSEVFNFKPQVRNEIDKIEWFDFKKISKTMYKSNIKYYLINSMMRPLSMWLRHQRQIKNEDQLKSYAEEQLKLLLGITKEEQIDPGRELLNMLHTAVQANSNNNAVSNGQVPSSQEHQHLKEQSGEHNQQKDQQSSFSSQQQPSIFPSLSEPFANNKNVIPPTMPMANVFMSNPQLFATMNGQPFAPFPFMLPLTNNSNSANPIPTPVPPNFNAPPNPMAFGVPNMHNLSGPAVSQPFSLPPAPLPRDSGYSSSSPGQLLDILNSKKPDSNVQSSKKPKLKILQRGTDLNSIKQNNNDETAHSNSQALLDLLKKPTSSQKTHASKPDTSFLPNDSVSGIQDAEYEDFESSSDEEVETARDERTSLNVDIGVNVMPSEKDSRRSQKEKPRSDANKTNLNASAESNSVEWGPGKSSPSTQSKQNSSVGMQNKYRQEIHIGDSDAYEVFESSSDEEDGKKLEELEQTQGNSKLISQDILKENNFQDGEVPHRDMPTESNKSINETVGLSSTTNTVKKVPKVKILKRGETFASLANDKKAFDSSSNVSSSKDLLQMLRNPISSTVSSNQQSPKSQHLSGDEEIMMMLKRNSVSKPQNSEENASTSSINDANASELLGMLKQKEKDITAPKQPYNVDSYSQKNPAKGLLNILKKNNSTGYPRTEGGPSSEMPTSMKRNDATNNQELDKNSTELLNYLKPKPLNDGYENISNKDSSHELLNILHGNKNSSTFNNNVYATDGYSLASDNNENSSNKLLNMLQNRSSAINEPNFDVRSNGTSGSNELLSILHRK</sequence>
<gene>
    <name type="primary">DCP2</name>
    <name type="synonym">PSU1</name>
    <name type="ORF">SCY_4676</name>
</gene>
<name>DCP2_YEAS7</name>
<accession>A6ZRW5</accession>
<accession>B0KZW2</accession>
<dbReference type="EC" id="3.-.-.-"/>
<dbReference type="EMBL" id="AAFW02000067">
    <property type="protein sequence ID" value="EDN62697.1"/>
    <property type="molecule type" value="Genomic_DNA"/>
</dbReference>
<dbReference type="EMBL" id="EF125227">
    <property type="protein sequence ID" value="ABN58638.1"/>
    <property type="molecule type" value="Genomic_DNA"/>
</dbReference>
<dbReference type="BMRB" id="A6ZRW5"/>
<dbReference type="SMR" id="A6ZRW5"/>
<dbReference type="HOGENOM" id="CLU_009571_0_0_1"/>
<dbReference type="Proteomes" id="UP000007060">
    <property type="component" value="Unassembled WGS sequence"/>
</dbReference>
<dbReference type="GO" id="GO:0000932">
    <property type="term" value="C:P-body"/>
    <property type="evidence" value="ECO:0007669"/>
    <property type="project" value="UniProtKB-SubCell"/>
</dbReference>
<dbReference type="GO" id="GO:0140933">
    <property type="term" value="F:5'-(N(7)-methylguanosine 5'-triphospho)-[mRNA] hydrolase activity"/>
    <property type="evidence" value="ECO:0007669"/>
    <property type="project" value="InterPro"/>
</dbReference>
<dbReference type="GO" id="GO:0030145">
    <property type="term" value="F:manganese ion binding"/>
    <property type="evidence" value="ECO:0007669"/>
    <property type="project" value="InterPro"/>
</dbReference>
<dbReference type="GO" id="GO:0003723">
    <property type="term" value="F:RNA binding"/>
    <property type="evidence" value="ECO:0007669"/>
    <property type="project" value="UniProtKB-KW"/>
</dbReference>
<dbReference type="GO" id="GO:0000290">
    <property type="term" value="P:deadenylation-dependent decapping of nuclear-transcribed mRNA"/>
    <property type="evidence" value="ECO:0007669"/>
    <property type="project" value="InterPro"/>
</dbReference>
<dbReference type="GO" id="GO:0006397">
    <property type="term" value="P:mRNA processing"/>
    <property type="evidence" value="ECO:0007669"/>
    <property type="project" value="UniProtKB-KW"/>
</dbReference>
<dbReference type="GO" id="GO:0000184">
    <property type="term" value="P:nuclear-transcribed mRNA catabolic process, nonsense-mediated decay"/>
    <property type="evidence" value="ECO:0007669"/>
    <property type="project" value="UniProtKB-KW"/>
</dbReference>
<dbReference type="CDD" id="cd03672">
    <property type="entry name" value="NUDIX_Dcp2p_Nudt20"/>
    <property type="match status" value="1"/>
</dbReference>
<dbReference type="FunFam" id="3.90.79.10:FF:000045">
    <property type="entry name" value="mRNA-decapping enzyme 2"/>
    <property type="match status" value="1"/>
</dbReference>
<dbReference type="Gene3D" id="1.10.10.1050">
    <property type="entry name" value="Dcp2, box A domain"/>
    <property type="match status" value="1"/>
</dbReference>
<dbReference type="Gene3D" id="3.90.79.10">
    <property type="entry name" value="Nucleoside Triphosphate Pyrophosphohydrolase"/>
    <property type="match status" value="1"/>
</dbReference>
<dbReference type="InterPro" id="IPR007722">
    <property type="entry name" value="DCP2_BoxA"/>
</dbReference>
<dbReference type="InterPro" id="IPR036189">
    <property type="entry name" value="DCP2_BoxA_sf"/>
</dbReference>
<dbReference type="InterPro" id="IPR044099">
    <property type="entry name" value="Dcp2_NUDIX"/>
</dbReference>
<dbReference type="InterPro" id="IPR015797">
    <property type="entry name" value="NUDIX_hydrolase-like_dom_sf"/>
</dbReference>
<dbReference type="InterPro" id="IPR020084">
    <property type="entry name" value="NUDIX_hydrolase_CS"/>
</dbReference>
<dbReference type="InterPro" id="IPR000086">
    <property type="entry name" value="NUDIX_hydrolase_dom"/>
</dbReference>
<dbReference type="PANTHER" id="PTHR23114">
    <property type="entry name" value="M7GPPPN-MRNA HYDROLASE"/>
    <property type="match status" value="1"/>
</dbReference>
<dbReference type="PANTHER" id="PTHR23114:SF17">
    <property type="entry name" value="M7GPPPN-MRNA HYDROLASE"/>
    <property type="match status" value="1"/>
</dbReference>
<dbReference type="Pfam" id="PF05026">
    <property type="entry name" value="DCP2"/>
    <property type="match status" value="1"/>
</dbReference>
<dbReference type="Pfam" id="PF00293">
    <property type="entry name" value="NUDIX"/>
    <property type="match status" value="1"/>
</dbReference>
<dbReference type="SMART" id="SM01125">
    <property type="entry name" value="DCP2"/>
    <property type="match status" value="1"/>
</dbReference>
<dbReference type="SUPFAM" id="SSF140586">
    <property type="entry name" value="Dcp2 domain-like"/>
    <property type="match status" value="1"/>
</dbReference>
<dbReference type="SUPFAM" id="SSF55811">
    <property type="entry name" value="Nudix"/>
    <property type="match status" value="1"/>
</dbReference>
<dbReference type="PROSITE" id="PS51462">
    <property type="entry name" value="NUDIX"/>
    <property type="match status" value="1"/>
</dbReference>
<dbReference type="PROSITE" id="PS00893">
    <property type="entry name" value="NUDIX_BOX"/>
    <property type="match status" value="1"/>
</dbReference>
<evidence type="ECO:0000250" key="1"/>
<evidence type="ECO:0000250" key="2">
    <source>
        <dbReference type="UniProtKB" id="P53550"/>
    </source>
</evidence>
<evidence type="ECO:0000255" key="3">
    <source>
        <dbReference type="PROSITE-ProRule" id="PRU00794"/>
    </source>
</evidence>
<evidence type="ECO:0000256" key="4">
    <source>
        <dbReference type="SAM" id="MobiDB-lite"/>
    </source>
</evidence>
<evidence type="ECO:0000305" key="5"/>
<feature type="chain" id="PRO_0000378320" description="mRNA-decapping enzyme subunit 2">
    <location>
        <begin position="1"/>
        <end position="970"/>
    </location>
</feature>
<feature type="domain" description="Nudix hydrolase" evidence="3">
    <location>
        <begin position="101"/>
        <end position="228"/>
    </location>
</feature>
<feature type="region of interest" description="Disordered" evidence="4">
    <location>
        <begin position="287"/>
        <end position="341"/>
    </location>
</feature>
<feature type="region of interest" description="Disordered" evidence="4">
    <location>
        <begin position="417"/>
        <end position="465"/>
    </location>
</feature>
<feature type="region of interest" description="Disordered" evidence="4">
    <location>
        <begin position="499"/>
        <end position="692"/>
    </location>
</feature>
<feature type="region of interest" description="Disordered" evidence="4">
    <location>
        <begin position="831"/>
        <end position="862"/>
    </location>
</feature>
<feature type="short sequence motif" description="Nudix box">
    <location>
        <begin position="134"/>
        <end position="155"/>
    </location>
</feature>
<feature type="compositionally biased region" description="Basic and acidic residues" evidence="4">
    <location>
        <begin position="300"/>
        <end position="314"/>
    </location>
</feature>
<feature type="compositionally biased region" description="Low complexity" evidence="4">
    <location>
        <begin position="315"/>
        <end position="334"/>
    </location>
</feature>
<feature type="compositionally biased region" description="Polar residues" evidence="4">
    <location>
        <begin position="499"/>
        <end position="522"/>
    </location>
</feature>
<feature type="compositionally biased region" description="Acidic residues" evidence="4">
    <location>
        <begin position="526"/>
        <end position="539"/>
    </location>
</feature>
<feature type="compositionally biased region" description="Basic and acidic residues" evidence="4">
    <location>
        <begin position="560"/>
        <end position="576"/>
    </location>
</feature>
<feature type="compositionally biased region" description="Polar residues" evidence="4">
    <location>
        <begin position="577"/>
        <end position="590"/>
    </location>
</feature>
<feature type="compositionally biased region" description="Low complexity" evidence="4">
    <location>
        <begin position="596"/>
        <end position="608"/>
    </location>
</feature>
<feature type="compositionally biased region" description="Acidic residues" evidence="4">
    <location>
        <begin position="625"/>
        <end position="637"/>
    </location>
</feature>
<feature type="compositionally biased region" description="Polar residues" evidence="4">
    <location>
        <begin position="677"/>
        <end position="691"/>
    </location>
</feature>
<feature type="binding site" evidence="1">
    <location>
        <position position="149"/>
    </location>
    <ligand>
        <name>Mn(2+)</name>
        <dbReference type="ChEBI" id="CHEBI:29035"/>
    </ligand>
</feature>
<feature type="binding site" evidence="1">
    <location>
        <position position="153"/>
    </location>
    <ligand>
        <name>Mn(2+)</name>
        <dbReference type="ChEBI" id="CHEBI:29035"/>
    </ligand>
</feature>
<feature type="modified residue" description="Phosphoserine" evidence="2">
    <location>
        <position position="116"/>
    </location>
</feature>
<feature type="modified residue" description="Phosphoserine" evidence="2">
    <location>
        <position position="439"/>
    </location>
</feature>
<feature type="modified residue" description="Phosphothreonine" evidence="2">
    <location>
        <position position="677"/>
    </location>
</feature>
<feature type="modified residue" description="Phosphoserine" evidence="2">
    <location>
        <position position="679"/>
    </location>
</feature>
<feature type="modified residue" description="Phosphoserine" evidence="2">
    <location>
        <position position="682"/>
    </location>
</feature>
<feature type="modified residue" description="Phosphoserine" evidence="2">
    <location>
        <position position="751"/>
    </location>
</feature>
<feature type="modified residue" description="Phosphoserine" evidence="2">
    <location>
        <position position="771"/>
    </location>
</feature>
<feature type="modified residue" description="Phosphoserine" evidence="2">
    <location>
        <position position="773"/>
    </location>
</feature>
<feature type="modified residue" description="Phosphoserine" evidence="2">
    <location>
        <position position="778"/>
    </location>
</feature>
<proteinExistence type="inferred from homology"/>
<reference key="1">
    <citation type="journal article" date="2008" name="Genetics">
        <title>Sequential elimination of major-effect contributors identifies additional quantitative trait loci conditioning high-temperature growth in yeast.</title>
        <authorList>
            <person name="Sinha H."/>
            <person name="David L."/>
            <person name="Pascon R.C."/>
            <person name="Clauder-Muenster S."/>
            <person name="Krishnakumar S."/>
            <person name="Nguyen M."/>
            <person name="Shi G."/>
            <person name="Dean J."/>
            <person name="Davis R.W."/>
            <person name="Oefner P.J."/>
            <person name="McCusker J.H."/>
            <person name="Steinmetz L.M."/>
        </authorList>
    </citation>
    <scope>NUCLEOTIDE SEQUENCE [GENOMIC DNA]</scope>
</reference>
<reference key="2">
    <citation type="journal article" date="2007" name="Proc. Natl. Acad. Sci. U.S.A.">
        <title>Genome sequencing and comparative analysis of Saccharomyces cerevisiae strain YJM789.</title>
        <authorList>
            <person name="Wei W."/>
            <person name="McCusker J.H."/>
            <person name="Hyman R.W."/>
            <person name="Jones T."/>
            <person name="Ning Y."/>
            <person name="Cao Z."/>
            <person name="Gu Z."/>
            <person name="Bruno D."/>
            <person name="Miranda M."/>
            <person name="Nguyen M."/>
            <person name="Wilhelmy J."/>
            <person name="Komp C."/>
            <person name="Tamse R."/>
            <person name="Wang X."/>
            <person name="Jia P."/>
            <person name="Luedi P."/>
            <person name="Oefner P.J."/>
            <person name="David L."/>
            <person name="Dietrich F.S."/>
            <person name="Li Y."/>
            <person name="Davis R.W."/>
            <person name="Steinmetz L.M."/>
        </authorList>
    </citation>
    <scope>NUCLEOTIDE SEQUENCE [LARGE SCALE GENOMIC DNA]</scope>
    <source>
        <strain>YJM789</strain>
    </source>
</reference>